<protein>
    <recommendedName>
        <fullName evidence="1">Enolase</fullName>
        <ecNumber evidence="1">4.2.1.11</ecNumber>
    </recommendedName>
    <alternativeName>
        <fullName evidence="1">2-phospho-D-glycerate hydro-lyase</fullName>
    </alternativeName>
    <alternativeName>
        <fullName evidence="1">2-phosphoglycerate dehydratase</fullName>
    </alternativeName>
</protein>
<keyword id="KW-0963">Cytoplasm</keyword>
<keyword id="KW-0324">Glycolysis</keyword>
<keyword id="KW-0456">Lyase</keyword>
<keyword id="KW-0460">Magnesium</keyword>
<keyword id="KW-0479">Metal-binding</keyword>
<keyword id="KW-1185">Reference proteome</keyword>
<keyword id="KW-0964">Secreted</keyword>
<proteinExistence type="evidence at protein level"/>
<organism>
    <name type="scientific">Mycolicibacterium smegmatis (strain ATCC 700084 / mc(2)155)</name>
    <name type="common">Mycobacterium smegmatis</name>
    <dbReference type="NCBI Taxonomy" id="246196"/>
    <lineage>
        <taxon>Bacteria</taxon>
        <taxon>Bacillati</taxon>
        <taxon>Actinomycetota</taxon>
        <taxon>Actinomycetes</taxon>
        <taxon>Mycobacteriales</taxon>
        <taxon>Mycobacteriaceae</taxon>
        <taxon>Mycolicibacterium</taxon>
    </lineage>
</organism>
<accession>A0R3B8</accession>
<accession>I7FK61</accession>
<feature type="initiator methionine" description="Removed" evidence="2">
    <location>
        <position position="1"/>
    </location>
</feature>
<feature type="chain" id="PRO_1000019222" description="Enolase">
    <location>
        <begin position="2"/>
        <end position="427"/>
    </location>
</feature>
<feature type="active site" description="Proton donor" evidence="1">
    <location>
        <position position="204"/>
    </location>
</feature>
<feature type="active site" description="Proton acceptor" evidence="1">
    <location>
        <position position="335"/>
    </location>
</feature>
<feature type="binding site" evidence="1">
    <location>
        <position position="162"/>
    </location>
    <ligand>
        <name>(2R)-2-phosphoglycerate</name>
        <dbReference type="ChEBI" id="CHEBI:58289"/>
    </ligand>
</feature>
<feature type="binding site" evidence="1">
    <location>
        <position position="241"/>
    </location>
    <ligand>
        <name>Mg(2+)</name>
        <dbReference type="ChEBI" id="CHEBI:18420"/>
    </ligand>
</feature>
<feature type="binding site" evidence="1">
    <location>
        <position position="283"/>
    </location>
    <ligand>
        <name>Mg(2+)</name>
        <dbReference type="ChEBI" id="CHEBI:18420"/>
    </ligand>
</feature>
<feature type="binding site" evidence="1">
    <location>
        <position position="310"/>
    </location>
    <ligand>
        <name>Mg(2+)</name>
        <dbReference type="ChEBI" id="CHEBI:18420"/>
    </ligand>
</feature>
<feature type="binding site" evidence="1">
    <location>
        <position position="335"/>
    </location>
    <ligand>
        <name>(2R)-2-phosphoglycerate</name>
        <dbReference type="ChEBI" id="CHEBI:58289"/>
    </ligand>
</feature>
<feature type="binding site" evidence="1">
    <location>
        <position position="364"/>
    </location>
    <ligand>
        <name>(2R)-2-phosphoglycerate</name>
        <dbReference type="ChEBI" id="CHEBI:58289"/>
    </ligand>
</feature>
<feature type="binding site" evidence="1">
    <location>
        <position position="365"/>
    </location>
    <ligand>
        <name>(2R)-2-phosphoglycerate</name>
        <dbReference type="ChEBI" id="CHEBI:58289"/>
    </ligand>
</feature>
<feature type="binding site" evidence="1">
    <location>
        <position position="386"/>
    </location>
    <ligand>
        <name>(2R)-2-phosphoglycerate</name>
        <dbReference type="ChEBI" id="CHEBI:58289"/>
    </ligand>
</feature>
<name>ENO_MYCS2</name>
<reference key="1">
    <citation type="submission" date="2006-10" db="EMBL/GenBank/DDBJ databases">
        <authorList>
            <person name="Fleischmann R.D."/>
            <person name="Dodson R.J."/>
            <person name="Haft D.H."/>
            <person name="Merkel J.S."/>
            <person name="Nelson W.C."/>
            <person name="Fraser C.M."/>
        </authorList>
    </citation>
    <scope>NUCLEOTIDE SEQUENCE [LARGE SCALE GENOMIC DNA]</scope>
    <source>
        <strain>ATCC 700084 / mc(2)155</strain>
    </source>
</reference>
<reference key="2">
    <citation type="journal article" date="2007" name="Genome Biol.">
        <title>Interrupted coding sequences in Mycobacterium smegmatis: authentic mutations or sequencing errors?</title>
        <authorList>
            <person name="Deshayes C."/>
            <person name="Perrodou E."/>
            <person name="Gallien S."/>
            <person name="Euphrasie D."/>
            <person name="Schaeffer C."/>
            <person name="Van-Dorsselaer A."/>
            <person name="Poch O."/>
            <person name="Lecompte O."/>
            <person name="Reyrat J.-M."/>
        </authorList>
    </citation>
    <scope>NUCLEOTIDE SEQUENCE [LARGE SCALE GENOMIC DNA]</scope>
    <source>
        <strain>ATCC 700084 / mc(2)155</strain>
    </source>
</reference>
<reference key="3">
    <citation type="journal article" date="2009" name="Genome Res.">
        <title>Ortho-proteogenomics: multiple proteomes investigation through orthology and a new MS-based protocol.</title>
        <authorList>
            <person name="Gallien S."/>
            <person name="Perrodou E."/>
            <person name="Carapito C."/>
            <person name="Deshayes C."/>
            <person name="Reyrat J.-M."/>
            <person name="Van Dorsselaer A."/>
            <person name="Poch O."/>
            <person name="Schaeffer C."/>
            <person name="Lecompte O."/>
        </authorList>
    </citation>
    <scope>NUCLEOTIDE SEQUENCE [LARGE SCALE GENOMIC DNA]</scope>
    <scope>IDENTIFICATION BY MASS SPECTROMETRY [LARGE SCALE ANALYSIS]</scope>
    <scope>CLEAVAGE OF INITIATOR METHIONINE</scope>
    <source>
        <strain>ATCC 700084 / mc(2)155</strain>
    </source>
</reference>
<reference key="4">
    <citation type="journal article" date="2018" name="Front. Microbiol.">
        <title>Identification of Enolase as the Target of 2-Aminothiazoles in Mycobacterium tuberculosis.</title>
        <authorList>
            <person name="Wescott H.H."/>
            <person name="Zuniga E.S."/>
            <person name="Bajpai A."/>
            <person name="Trujillo C."/>
            <person name="Ehrt S."/>
            <person name="Schnappinger D."/>
            <person name="Roberts D.M."/>
            <person name="Parish T."/>
        </authorList>
    </citation>
    <scope>IDENTIFICATION BY MASS SPECTROMETRY</scope>
    <scope>INTERACTION WITH 2-AMINOTHIAZOLE ANTIBIOTICS</scope>
    <scope>BIOTECHNOLOGY</scope>
    <source>
        <strain>ATCC 700084 / mc(2)155</strain>
    </source>
</reference>
<dbReference type="EC" id="4.2.1.11" evidence="1"/>
<dbReference type="EMBL" id="CP000480">
    <property type="protein sequence ID" value="ABK73932.1"/>
    <property type="molecule type" value="Genomic_DNA"/>
</dbReference>
<dbReference type="EMBL" id="CP001663">
    <property type="protein sequence ID" value="AFP41710.1"/>
    <property type="molecule type" value="Genomic_DNA"/>
</dbReference>
<dbReference type="RefSeq" id="WP_003896814.1">
    <property type="nucleotide sequence ID" value="NZ_SIJM01000006.1"/>
</dbReference>
<dbReference type="RefSeq" id="YP_889656.1">
    <property type="nucleotide sequence ID" value="NC_008596.1"/>
</dbReference>
<dbReference type="SMR" id="A0R3B8"/>
<dbReference type="STRING" id="246196.MSMEG_5415"/>
<dbReference type="PaxDb" id="246196-MSMEI_5267"/>
<dbReference type="GeneID" id="93460066"/>
<dbReference type="KEGG" id="msb:LJ00_26760"/>
<dbReference type="KEGG" id="msg:MSMEI_5267"/>
<dbReference type="KEGG" id="msm:MSMEG_5415"/>
<dbReference type="PATRIC" id="fig|246196.19.peg.5278"/>
<dbReference type="eggNOG" id="COG0148">
    <property type="taxonomic scope" value="Bacteria"/>
</dbReference>
<dbReference type="OrthoDB" id="9804716at2"/>
<dbReference type="UniPathway" id="UPA00109">
    <property type="reaction ID" value="UER00187"/>
</dbReference>
<dbReference type="Proteomes" id="UP000000757">
    <property type="component" value="Chromosome"/>
</dbReference>
<dbReference type="Proteomes" id="UP000006158">
    <property type="component" value="Chromosome"/>
</dbReference>
<dbReference type="GO" id="GO:0009986">
    <property type="term" value="C:cell surface"/>
    <property type="evidence" value="ECO:0007669"/>
    <property type="project" value="UniProtKB-SubCell"/>
</dbReference>
<dbReference type="GO" id="GO:0005576">
    <property type="term" value="C:extracellular region"/>
    <property type="evidence" value="ECO:0007669"/>
    <property type="project" value="UniProtKB-SubCell"/>
</dbReference>
<dbReference type="GO" id="GO:0000015">
    <property type="term" value="C:phosphopyruvate hydratase complex"/>
    <property type="evidence" value="ECO:0007669"/>
    <property type="project" value="InterPro"/>
</dbReference>
<dbReference type="GO" id="GO:0000287">
    <property type="term" value="F:magnesium ion binding"/>
    <property type="evidence" value="ECO:0007669"/>
    <property type="project" value="UniProtKB-UniRule"/>
</dbReference>
<dbReference type="GO" id="GO:0004634">
    <property type="term" value="F:phosphopyruvate hydratase activity"/>
    <property type="evidence" value="ECO:0007669"/>
    <property type="project" value="UniProtKB-UniRule"/>
</dbReference>
<dbReference type="GO" id="GO:0006096">
    <property type="term" value="P:glycolytic process"/>
    <property type="evidence" value="ECO:0007669"/>
    <property type="project" value="UniProtKB-UniRule"/>
</dbReference>
<dbReference type="CDD" id="cd03313">
    <property type="entry name" value="enolase"/>
    <property type="match status" value="1"/>
</dbReference>
<dbReference type="FunFam" id="3.20.20.120:FF:000001">
    <property type="entry name" value="Enolase"/>
    <property type="match status" value="1"/>
</dbReference>
<dbReference type="FunFam" id="3.30.390.10:FF:000001">
    <property type="entry name" value="Enolase"/>
    <property type="match status" value="1"/>
</dbReference>
<dbReference type="Gene3D" id="3.20.20.120">
    <property type="entry name" value="Enolase-like C-terminal domain"/>
    <property type="match status" value="1"/>
</dbReference>
<dbReference type="Gene3D" id="3.30.390.10">
    <property type="entry name" value="Enolase-like, N-terminal domain"/>
    <property type="match status" value="1"/>
</dbReference>
<dbReference type="HAMAP" id="MF_00318">
    <property type="entry name" value="Enolase"/>
    <property type="match status" value="1"/>
</dbReference>
<dbReference type="InterPro" id="IPR000941">
    <property type="entry name" value="Enolase"/>
</dbReference>
<dbReference type="InterPro" id="IPR036849">
    <property type="entry name" value="Enolase-like_C_sf"/>
</dbReference>
<dbReference type="InterPro" id="IPR029017">
    <property type="entry name" value="Enolase-like_N"/>
</dbReference>
<dbReference type="InterPro" id="IPR020810">
    <property type="entry name" value="Enolase_C"/>
</dbReference>
<dbReference type="InterPro" id="IPR020809">
    <property type="entry name" value="Enolase_CS"/>
</dbReference>
<dbReference type="InterPro" id="IPR020811">
    <property type="entry name" value="Enolase_N"/>
</dbReference>
<dbReference type="NCBIfam" id="TIGR01060">
    <property type="entry name" value="eno"/>
    <property type="match status" value="1"/>
</dbReference>
<dbReference type="PANTHER" id="PTHR11902">
    <property type="entry name" value="ENOLASE"/>
    <property type="match status" value="1"/>
</dbReference>
<dbReference type="PANTHER" id="PTHR11902:SF1">
    <property type="entry name" value="ENOLASE"/>
    <property type="match status" value="1"/>
</dbReference>
<dbReference type="Pfam" id="PF00113">
    <property type="entry name" value="Enolase_C"/>
    <property type="match status" value="1"/>
</dbReference>
<dbReference type="Pfam" id="PF03952">
    <property type="entry name" value="Enolase_N"/>
    <property type="match status" value="1"/>
</dbReference>
<dbReference type="PIRSF" id="PIRSF001400">
    <property type="entry name" value="Enolase"/>
    <property type="match status" value="1"/>
</dbReference>
<dbReference type="PRINTS" id="PR00148">
    <property type="entry name" value="ENOLASE"/>
</dbReference>
<dbReference type="SFLD" id="SFLDS00001">
    <property type="entry name" value="Enolase"/>
    <property type="match status" value="1"/>
</dbReference>
<dbReference type="SFLD" id="SFLDF00002">
    <property type="entry name" value="enolase"/>
    <property type="match status" value="1"/>
</dbReference>
<dbReference type="SMART" id="SM01192">
    <property type="entry name" value="Enolase_C"/>
    <property type="match status" value="1"/>
</dbReference>
<dbReference type="SMART" id="SM01193">
    <property type="entry name" value="Enolase_N"/>
    <property type="match status" value="1"/>
</dbReference>
<dbReference type="SUPFAM" id="SSF51604">
    <property type="entry name" value="Enolase C-terminal domain-like"/>
    <property type="match status" value="1"/>
</dbReference>
<dbReference type="SUPFAM" id="SSF54826">
    <property type="entry name" value="Enolase N-terminal domain-like"/>
    <property type="match status" value="1"/>
</dbReference>
<dbReference type="PROSITE" id="PS00164">
    <property type="entry name" value="ENOLASE"/>
    <property type="match status" value="1"/>
</dbReference>
<comment type="function">
    <text evidence="1">Catalyzes the reversible conversion of 2-phosphoglycerate (2-PG) into phosphoenolpyruvate (PEP). It is essential for the degradation of carbohydrates via glycolysis.</text>
</comment>
<comment type="catalytic activity">
    <reaction evidence="1">
        <text>(2R)-2-phosphoglycerate = phosphoenolpyruvate + H2O</text>
        <dbReference type="Rhea" id="RHEA:10164"/>
        <dbReference type="ChEBI" id="CHEBI:15377"/>
        <dbReference type="ChEBI" id="CHEBI:58289"/>
        <dbReference type="ChEBI" id="CHEBI:58702"/>
        <dbReference type="EC" id="4.2.1.11"/>
    </reaction>
</comment>
<comment type="cofactor">
    <cofactor evidence="1">
        <name>Mg(2+)</name>
        <dbReference type="ChEBI" id="CHEBI:18420"/>
    </cofactor>
    <text evidence="1">Binds a second Mg(2+) ion via substrate during catalysis.</text>
</comment>
<comment type="pathway">
    <text evidence="1">Carbohydrate degradation; glycolysis; pyruvate from D-glyceraldehyde 3-phosphate: step 4/5.</text>
</comment>
<comment type="subcellular location">
    <subcellularLocation>
        <location evidence="1">Cytoplasm</location>
    </subcellularLocation>
    <subcellularLocation>
        <location evidence="1">Secreted</location>
    </subcellularLocation>
    <subcellularLocation>
        <location evidence="1">Cell surface</location>
    </subcellularLocation>
    <text evidence="1">Fractions of enolase are present in both the cytoplasm and on the cell surface.</text>
</comment>
<comment type="biotechnology">
    <text evidence="3">Binds 2-aminothiazole antibiotics, which are antitubercular drugs. This protein may be a possible drug target (PubMed:30416491).</text>
</comment>
<comment type="similarity">
    <text evidence="1">Belongs to the enolase family.</text>
</comment>
<evidence type="ECO:0000255" key="1">
    <source>
        <dbReference type="HAMAP-Rule" id="MF_00318"/>
    </source>
</evidence>
<evidence type="ECO:0000269" key="2">
    <source>
    </source>
</evidence>
<evidence type="ECO:0000269" key="3">
    <source>
    </source>
</evidence>
<gene>
    <name evidence="1" type="primary">eno</name>
    <name type="ordered locus">MSMEG_5415</name>
    <name type="ordered locus">MSMEI_5267</name>
</gene>
<sequence length="427" mass="44761">MPIIEQVGAREILDSRGNPTVEVEVALTDGTFARAAVPSGASTGEHEAVELRDGGSRYGGKGVEKAVEAVLDEIAPQVIGLSADDQRLVDQALLDLDGTPDKSRLGANAILGVSLAVSKAAAESAGLPLFRYIGGPNAHILPVPMMNILNGGAHADTGVDVQEFMVAPIGAPSFKEALRWGAEVYHSLKSVLKNQGLATGLGDEGGFAPDVAGTKAALDLISSAIEATGLKLGSDVALALDVAATEFYTEGSGYAFEKETRTAEQMAEFYAGLLDSYPLVSIEDPLSEDDWDGWVSLTAAIGDRIQLVGDDLFVTNPERLEDGIQRGAANALLVKVNQIGTLTETLDAVSLAHNSGYRTMMSHRSGETEDTTIADLAVAVGSGQIKTGAPARSERVAKYNQLLRIEETLGDAARYAGDLAFPRLEAK</sequence>